<reference key="1">
    <citation type="journal article" date="2005" name="Nucleic Acids Res.">
        <title>Genomic blueprint of Hahella chejuensis, a marine microbe producing an algicidal agent.</title>
        <authorList>
            <person name="Jeong H."/>
            <person name="Yim J.H."/>
            <person name="Lee C."/>
            <person name="Choi S.-H."/>
            <person name="Park Y.K."/>
            <person name="Yoon S.H."/>
            <person name="Hur C.-G."/>
            <person name="Kang H.-Y."/>
            <person name="Kim D."/>
            <person name="Lee H.H."/>
            <person name="Park K.H."/>
            <person name="Park S.-H."/>
            <person name="Park H.-S."/>
            <person name="Lee H.K."/>
            <person name="Oh T.K."/>
            <person name="Kim J.F."/>
        </authorList>
    </citation>
    <scope>NUCLEOTIDE SEQUENCE [LARGE SCALE GENOMIC DNA]</scope>
    <source>
        <strain>KCTC 2396</strain>
    </source>
</reference>
<dbReference type="EMBL" id="CP000155">
    <property type="protein sequence ID" value="ABC32857.1"/>
    <property type="molecule type" value="Genomic_DNA"/>
</dbReference>
<dbReference type="RefSeq" id="WP_011399915.1">
    <property type="nucleotide sequence ID" value="NC_007645.1"/>
</dbReference>
<dbReference type="SMR" id="Q2S917"/>
<dbReference type="STRING" id="349521.HCH_06212"/>
<dbReference type="KEGG" id="hch:HCH_06212"/>
<dbReference type="eggNOG" id="COG0091">
    <property type="taxonomic scope" value="Bacteria"/>
</dbReference>
<dbReference type="HOGENOM" id="CLU_083987_3_3_6"/>
<dbReference type="OrthoDB" id="9805969at2"/>
<dbReference type="Proteomes" id="UP000000238">
    <property type="component" value="Chromosome"/>
</dbReference>
<dbReference type="GO" id="GO:0022625">
    <property type="term" value="C:cytosolic large ribosomal subunit"/>
    <property type="evidence" value="ECO:0007669"/>
    <property type="project" value="TreeGrafter"/>
</dbReference>
<dbReference type="GO" id="GO:0019843">
    <property type="term" value="F:rRNA binding"/>
    <property type="evidence" value="ECO:0007669"/>
    <property type="project" value="UniProtKB-UniRule"/>
</dbReference>
<dbReference type="GO" id="GO:0003735">
    <property type="term" value="F:structural constituent of ribosome"/>
    <property type="evidence" value="ECO:0007669"/>
    <property type="project" value="InterPro"/>
</dbReference>
<dbReference type="GO" id="GO:0006412">
    <property type="term" value="P:translation"/>
    <property type="evidence" value="ECO:0007669"/>
    <property type="project" value="UniProtKB-UniRule"/>
</dbReference>
<dbReference type="CDD" id="cd00336">
    <property type="entry name" value="Ribosomal_L22"/>
    <property type="match status" value="1"/>
</dbReference>
<dbReference type="FunFam" id="3.90.470.10:FF:000001">
    <property type="entry name" value="50S ribosomal protein L22"/>
    <property type="match status" value="1"/>
</dbReference>
<dbReference type="Gene3D" id="3.90.470.10">
    <property type="entry name" value="Ribosomal protein L22/L17"/>
    <property type="match status" value="1"/>
</dbReference>
<dbReference type="HAMAP" id="MF_01331_B">
    <property type="entry name" value="Ribosomal_uL22_B"/>
    <property type="match status" value="1"/>
</dbReference>
<dbReference type="InterPro" id="IPR001063">
    <property type="entry name" value="Ribosomal_uL22"/>
</dbReference>
<dbReference type="InterPro" id="IPR005727">
    <property type="entry name" value="Ribosomal_uL22_bac/chlpt-type"/>
</dbReference>
<dbReference type="InterPro" id="IPR047867">
    <property type="entry name" value="Ribosomal_uL22_bac/org-type"/>
</dbReference>
<dbReference type="InterPro" id="IPR018260">
    <property type="entry name" value="Ribosomal_uL22_CS"/>
</dbReference>
<dbReference type="InterPro" id="IPR036394">
    <property type="entry name" value="Ribosomal_uL22_sf"/>
</dbReference>
<dbReference type="NCBIfam" id="TIGR01044">
    <property type="entry name" value="rplV_bact"/>
    <property type="match status" value="1"/>
</dbReference>
<dbReference type="PANTHER" id="PTHR13501">
    <property type="entry name" value="CHLOROPLAST 50S RIBOSOMAL PROTEIN L22-RELATED"/>
    <property type="match status" value="1"/>
</dbReference>
<dbReference type="PANTHER" id="PTHR13501:SF8">
    <property type="entry name" value="LARGE RIBOSOMAL SUBUNIT PROTEIN UL22M"/>
    <property type="match status" value="1"/>
</dbReference>
<dbReference type="Pfam" id="PF00237">
    <property type="entry name" value="Ribosomal_L22"/>
    <property type="match status" value="1"/>
</dbReference>
<dbReference type="SUPFAM" id="SSF54843">
    <property type="entry name" value="Ribosomal protein L22"/>
    <property type="match status" value="1"/>
</dbReference>
<dbReference type="PROSITE" id="PS00464">
    <property type="entry name" value="RIBOSOMAL_L22"/>
    <property type="match status" value="1"/>
</dbReference>
<organism>
    <name type="scientific">Hahella chejuensis (strain KCTC 2396)</name>
    <dbReference type="NCBI Taxonomy" id="349521"/>
    <lineage>
        <taxon>Bacteria</taxon>
        <taxon>Pseudomonadati</taxon>
        <taxon>Pseudomonadota</taxon>
        <taxon>Gammaproteobacteria</taxon>
        <taxon>Oceanospirillales</taxon>
        <taxon>Hahellaceae</taxon>
        <taxon>Hahella</taxon>
    </lineage>
</organism>
<gene>
    <name evidence="1" type="primary">rplV</name>
    <name type="ordered locus">HCH_06212</name>
</gene>
<proteinExistence type="inferred from homology"/>
<accession>Q2S917</accession>
<keyword id="KW-1185">Reference proteome</keyword>
<keyword id="KW-0687">Ribonucleoprotein</keyword>
<keyword id="KW-0689">Ribosomal protein</keyword>
<keyword id="KW-0694">RNA-binding</keyword>
<keyword id="KW-0699">rRNA-binding</keyword>
<comment type="function">
    <text evidence="1">This protein binds specifically to 23S rRNA; its binding is stimulated by other ribosomal proteins, e.g. L4, L17, and L20. It is important during the early stages of 50S assembly. It makes multiple contacts with different domains of the 23S rRNA in the assembled 50S subunit and ribosome (By similarity).</text>
</comment>
<comment type="function">
    <text evidence="1">The globular domain of the protein is located near the polypeptide exit tunnel on the outside of the subunit, while an extended beta-hairpin is found that lines the wall of the exit tunnel in the center of the 70S ribosome.</text>
</comment>
<comment type="subunit">
    <text evidence="1">Part of the 50S ribosomal subunit.</text>
</comment>
<comment type="similarity">
    <text evidence="1">Belongs to the universal ribosomal protein uL22 family.</text>
</comment>
<sequence length="110" mass="12126">MEVAAKLFGARLSAQKARLVADQVRGKRVEEALDILTFSPKKASSIIKKVLESAIANAEHNEGLDVDELKVATICVDEGPTMKRIKPRAKGRADRIFKRTCHITVKVAEE</sequence>
<name>RL22_HAHCH</name>
<feature type="chain" id="PRO_0000243156" description="Large ribosomal subunit protein uL22">
    <location>
        <begin position="1"/>
        <end position="110"/>
    </location>
</feature>
<protein>
    <recommendedName>
        <fullName evidence="1">Large ribosomal subunit protein uL22</fullName>
    </recommendedName>
    <alternativeName>
        <fullName evidence="2">50S ribosomal protein L22</fullName>
    </alternativeName>
</protein>
<evidence type="ECO:0000255" key="1">
    <source>
        <dbReference type="HAMAP-Rule" id="MF_01331"/>
    </source>
</evidence>
<evidence type="ECO:0000305" key="2"/>